<feature type="chain" id="PRO_0000105862" description="Nuclease SbcCD subunit C">
    <location>
        <begin position="1"/>
        <end position="1163"/>
    </location>
</feature>
<feature type="coiled-coil region" evidence="2">
    <location>
        <begin position="197"/>
        <end position="415"/>
    </location>
</feature>
<feature type="coiled-coil region" evidence="2">
    <location>
        <begin position="446"/>
        <end position="1003"/>
    </location>
</feature>
<feature type="binding site" evidence="2">
    <location>
        <begin position="35"/>
        <end position="42"/>
    </location>
    <ligand>
        <name>ATP</name>
        <dbReference type="ChEBI" id="CHEBI:30616"/>
    </ligand>
</feature>
<gene>
    <name type="primary">sbcC</name>
    <name type="ordered locus">CA_C2736</name>
</gene>
<protein>
    <recommendedName>
        <fullName>Nuclease SbcCD subunit C</fullName>
    </recommendedName>
</protein>
<name>SBCC_CLOAB</name>
<accession>Q97FK1</accession>
<dbReference type="EMBL" id="AE001437">
    <property type="protein sequence ID" value="AAK80682.1"/>
    <property type="molecule type" value="Genomic_DNA"/>
</dbReference>
<dbReference type="PIR" id="G97236">
    <property type="entry name" value="G97236"/>
</dbReference>
<dbReference type="RefSeq" id="NP_349342.1">
    <property type="nucleotide sequence ID" value="NC_003030.1"/>
</dbReference>
<dbReference type="RefSeq" id="WP_010966023.1">
    <property type="nucleotide sequence ID" value="NC_003030.1"/>
</dbReference>
<dbReference type="SMR" id="Q97FK1"/>
<dbReference type="STRING" id="272562.CA_C2736"/>
<dbReference type="KEGG" id="cac:CA_C2736"/>
<dbReference type="PATRIC" id="fig|272562.8.peg.2925"/>
<dbReference type="eggNOG" id="COG0419">
    <property type="taxonomic scope" value="Bacteria"/>
</dbReference>
<dbReference type="HOGENOM" id="CLU_004785_1_2_9"/>
<dbReference type="OrthoDB" id="9795626at2"/>
<dbReference type="Proteomes" id="UP000000814">
    <property type="component" value="Chromosome"/>
</dbReference>
<dbReference type="GO" id="GO:0005524">
    <property type="term" value="F:ATP binding"/>
    <property type="evidence" value="ECO:0007669"/>
    <property type="project" value="UniProtKB-KW"/>
</dbReference>
<dbReference type="GO" id="GO:0016887">
    <property type="term" value="F:ATP hydrolysis activity"/>
    <property type="evidence" value="ECO:0007669"/>
    <property type="project" value="InterPro"/>
</dbReference>
<dbReference type="GO" id="GO:0004519">
    <property type="term" value="F:endonuclease activity"/>
    <property type="evidence" value="ECO:0007669"/>
    <property type="project" value="UniProtKB-KW"/>
</dbReference>
<dbReference type="GO" id="GO:0004527">
    <property type="term" value="F:exonuclease activity"/>
    <property type="evidence" value="ECO:0007669"/>
    <property type="project" value="UniProtKB-KW"/>
</dbReference>
<dbReference type="GO" id="GO:0006310">
    <property type="term" value="P:DNA recombination"/>
    <property type="evidence" value="ECO:0007669"/>
    <property type="project" value="UniProtKB-KW"/>
</dbReference>
<dbReference type="GO" id="GO:0006260">
    <property type="term" value="P:DNA replication"/>
    <property type="evidence" value="ECO:0007669"/>
    <property type="project" value="UniProtKB-KW"/>
</dbReference>
<dbReference type="GO" id="GO:0006302">
    <property type="term" value="P:double-strand break repair"/>
    <property type="evidence" value="ECO:0007669"/>
    <property type="project" value="InterPro"/>
</dbReference>
<dbReference type="Gene3D" id="3.40.50.300">
    <property type="entry name" value="P-loop containing nucleotide triphosphate hydrolases"/>
    <property type="match status" value="2"/>
</dbReference>
<dbReference type="InterPro" id="IPR027417">
    <property type="entry name" value="P-loop_NTPase"/>
</dbReference>
<dbReference type="InterPro" id="IPR038729">
    <property type="entry name" value="Rad50/SbcC_AAA"/>
</dbReference>
<dbReference type="PANTHER" id="PTHR32114">
    <property type="entry name" value="ABC TRANSPORTER ABCH.3"/>
    <property type="match status" value="1"/>
</dbReference>
<dbReference type="PANTHER" id="PTHR32114:SF2">
    <property type="entry name" value="ABC TRANSPORTER ABCH.3"/>
    <property type="match status" value="1"/>
</dbReference>
<dbReference type="Pfam" id="PF13476">
    <property type="entry name" value="AAA_23"/>
    <property type="match status" value="1"/>
</dbReference>
<dbReference type="Pfam" id="PF13558">
    <property type="entry name" value="SbcC_Walker_B"/>
    <property type="match status" value="1"/>
</dbReference>
<dbReference type="SUPFAM" id="SSF52540">
    <property type="entry name" value="P-loop containing nucleoside triphosphate hydrolases"/>
    <property type="match status" value="2"/>
</dbReference>
<organism>
    <name type="scientific">Clostridium acetobutylicum (strain ATCC 824 / DSM 792 / JCM 1419 / IAM 19013 / LMG 5710 / NBRC 13948 / NRRL B-527 / VKM B-1787 / 2291 / W)</name>
    <dbReference type="NCBI Taxonomy" id="272562"/>
    <lineage>
        <taxon>Bacteria</taxon>
        <taxon>Bacillati</taxon>
        <taxon>Bacillota</taxon>
        <taxon>Clostridia</taxon>
        <taxon>Eubacteriales</taxon>
        <taxon>Clostridiaceae</taxon>
        <taxon>Clostridium</taxon>
    </lineage>
</organism>
<evidence type="ECO:0000250" key="1"/>
<evidence type="ECO:0000255" key="2"/>
<evidence type="ECO:0000305" key="3"/>
<keyword id="KW-0067">ATP-binding</keyword>
<keyword id="KW-0175">Coiled coil</keyword>
<keyword id="KW-0233">DNA recombination</keyword>
<keyword id="KW-0235">DNA replication</keyword>
<keyword id="KW-0255">Endonuclease</keyword>
<keyword id="KW-0269">Exonuclease</keyword>
<keyword id="KW-0378">Hydrolase</keyword>
<keyword id="KW-0540">Nuclease</keyword>
<keyword id="KW-0547">Nucleotide-binding</keyword>
<keyword id="KW-1185">Reference proteome</keyword>
<sequence>MKPIRVRIKGLNSFENEQEINFEKLTKRGLFGIFGPTGSGKTTILDSITLSLYGEVARKSSNFMNTNCNSLNVSFEFQISGKEIKRYLVEREFRRDNKTGSVRSKSAKIVDITGDEVEVLEEGAKSVNEKCQEIIGLSLDDFTRTVVLPQGKFSEFLKLEGKERRNMLERLFNLQEYGDELSFKLARKIRKEREKENVLVGELKGYENINEDVLKERRELLKENNDFFNEASKEYLKAEEEYNEGKEVWGLQIEIEEKNRVRKDLMEKKDEIDLKEKRARLGESSSKVKPYIDNYENTLKQIDILKEQILSRENTMKAISLEKEDMEKKLSIAKDNKEKALPKFMIKHHIILDAIKEKDLLDNIKLEKKRLQGKIEKLSLEASNKEELIKQNIKDIDSLTLKIQNLESKIDNLKVPEEYKNKINEGIFLLRNYDEKLKHKNKLGLDCDKFQVDFEKAKSKKEMLFNKLEEERSKLDTYTKKLQDLNKDFPKDDVLLTFQEKLNDSRQKWAKYSEYNESLKASLRVVENSEQVLRTKKEEMTKLEDKISKVNIKIESLETENMAHVLREKLKSGEACPVCGSVHHIKEGFKEVDLKALETLKSELEGFEKKRKFENEEIVMCEASIKVEEKNIKKLNESINNLGEEFKEVSLESMEKKFNYLKEKVNKFNLEKIQLDDNIKDLSERSNKIEVEYQKEKTVEKQCEKRIVDLKSELEEAIKEFNEVAYTIENLKAELKIQDFKFEMKEILEKERVRVEAEGEIKDLRNLLNIRHTEKEQLMDKCSRLKEELSKNKAELKEKDKIINEKIELIKNKVGVLDNLYELKEKIEGTIKKIEEQYNLCDKKMNEIEDKYRKCSDEIIKYHSNLSSLKDRKVNDIDKLNKILMEEKFENIEKAKENYLNDKEINLLKSDVEKYKNELSKVNGAVEVLSKKLKNRKLTEEKWIEIQNNRVEKASKAKALQERSIKLEEEVKNIEIKLKELGKLLKTKQELEHKLSLLDDLEKLFKGKKFVEFVALNQLKYISIEASKRLKEITGGNYGLEVDDNGKFIIRDYKNGGAKRDASTLSGGETFVTSLALALSLSNQIQLRGSAPLELFFLDEGFGTLDSNLLEVVMDSLEKIHSERLSVGIISHLEVIKERMPVRLIVSPAEAGVGGSKVKLEIS</sequence>
<reference key="1">
    <citation type="journal article" date="2001" name="J. Bacteriol.">
        <title>Genome sequence and comparative analysis of the solvent-producing bacterium Clostridium acetobutylicum.</title>
        <authorList>
            <person name="Noelling J."/>
            <person name="Breton G."/>
            <person name="Omelchenko M.V."/>
            <person name="Makarova K.S."/>
            <person name="Zeng Q."/>
            <person name="Gibson R."/>
            <person name="Lee H.M."/>
            <person name="Dubois J."/>
            <person name="Qiu D."/>
            <person name="Hitti J."/>
            <person name="Wolf Y.I."/>
            <person name="Tatusov R.L."/>
            <person name="Sabathe F."/>
            <person name="Doucette-Stamm L.A."/>
            <person name="Soucaille P."/>
            <person name="Daly M.J."/>
            <person name="Bennett G.N."/>
            <person name="Koonin E.V."/>
            <person name="Smith D.R."/>
        </authorList>
    </citation>
    <scope>NUCLEOTIDE SEQUENCE [LARGE SCALE GENOMIC DNA]</scope>
    <source>
        <strain>ATCC 824 / DSM 792 / JCM 1419 / IAM 19013 / LMG 5710 / NBRC 13948 / NRRL B-527 / VKM B-1787 / 2291 / W</strain>
    </source>
</reference>
<comment type="function">
    <text evidence="1">SbcCD cleaves DNA hairpin structures. These structures can inhibit DNA replication and are intermediates in certain DNA recombination reactions. The complex acts as a 3'-&gt;5' double strand exonuclease that can open hairpins. It also has a 5' single-strand endonuclease activity (By similarity).</text>
</comment>
<comment type="subunit">
    <text evidence="1">Heterodimer of SbcC and SbcD.</text>
</comment>
<comment type="similarity">
    <text evidence="3">Belongs to the SMC family. SbcC subfamily.</text>
</comment>
<proteinExistence type="inferred from homology"/>